<dbReference type="EMBL" id="AM406670">
    <property type="protein sequence ID" value="CAL93702.1"/>
    <property type="molecule type" value="Genomic_DNA"/>
</dbReference>
<dbReference type="RefSeq" id="WP_011764819.1">
    <property type="nucleotide sequence ID" value="NC_008702.1"/>
</dbReference>
<dbReference type="SMR" id="A1K4E7"/>
<dbReference type="STRING" id="62928.azo1085"/>
<dbReference type="KEGG" id="aoa:dqs_1194"/>
<dbReference type="KEGG" id="azo:azo1085"/>
<dbReference type="eggNOG" id="COG0776">
    <property type="taxonomic scope" value="Bacteria"/>
</dbReference>
<dbReference type="HOGENOM" id="CLU_105066_1_3_4"/>
<dbReference type="OrthoDB" id="9797747at2"/>
<dbReference type="Proteomes" id="UP000002588">
    <property type="component" value="Chromosome"/>
</dbReference>
<dbReference type="GO" id="GO:0005829">
    <property type="term" value="C:cytosol"/>
    <property type="evidence" value="ECO:0007669"/>
    <property type="project" value="TreeGrafter"/>
</dbReference>
<dbReference type="GO" id="GO:0003677">
    <property type="term" value="F:DNA binding"/>
    <property type="evidence" value="ECO:0007669"/>
    <property type="project" value="UniProtKB-UniRule"/>
</dbReference>
<dbReference type="GO" id="GO:0030527">
    <property type="term" value="F:structural constituent of chromatin"/>
    <property type="evidence" value="ECO:0007669"/>
    <property type="project" value="InterPro"/>
</dbReference>
<dbReference type="GO" id="GO:0006310">
    <property type="term" value="P:DNA recombination"/>
    <property type="evidence" value="ECO:0007669"/>
    <property type="project" value="UniProtKB-UniRule"/>
</dbReference>
<dbReference type="GO" id="GO:0009893">
    <property type="term" value="P:positive regulation of metabolic process"/>
    <property type="evidence" value="ECO:0007669"/>
    <property type="project" value="UniProtKB-ARBA"/>
</dbReference>
<dbReference type="GO" id="GO:0006355">
    <property type="term" value="P:regulation of DNA-templated transcription"/>
    <property type="evidence" value="ECO:0007669"/>
    <property type="project" value="UniProtKB-UniRule"/>
</dbReference>
<dbReference type="GO" id="GO:0006417">
    <property type="term" value="P:regulation of translation"/>
    <property type="evidence" value="ECO:0007669"/>
    <property type="project" value="UniProtKB-UniRule"/>
</dbReference>
<dbReference type="CDD" id="cd13835">
    <property type="entry name" value="IHF_A"/>
    <property type="match status" value="1"/>
</dbReference>
<dbReference type="FunFam" id="4.10.520.10:FF:000002">
    <property type="entry name" value="Integration host factor subunit alpha"/>
    <property type="match status" value="1"/>
</dbReference>
<dbReference type="Gene3D" id="4.10.520.10">
    <property type="entry name" value="IHF-like DNA-binding proteins"/>
    <property type="match status" value="1"/>
</dbReference>
<dbReference type="HAMAP" id="MF_00380">
    <property type="entry name" value="IHF_alpha"/>
    <property type="match status" value="1"/>
</dbReference>
<dbReference type="InterPro" id="IPR000119">
    <property type="entry name" value="Hist_DNA-bd"/>
</dbReference>
<dbReference type="InterPro" id="IPR020816">
    <property type="entry name" value="Histone-like_DNA-bd_CS"/>
</dbReference>
<dbReference type="InterPro" id="IPR010992">
    <property type="entry name" value="IHF-like_DNA-bd_dom_sf"/>
</dbReference>
<dbReference type="InterPro" id="IPR005684">
    <property type="entry name" value="IHF_alpha"/>
</dbReference>
<dbReference type="NCBIfam" id="TIGR00987">
    <property type="entry name" value="himA"/>
    <property type="match status" value="1"/>
</dbReference>
<dbReference type="NCBIfam" id="NF001401">
    <property type="entry name" value="PRK00285.1"/>
    <property type="match status" value="1"/>
</dbReference>
<dbReference type="PANTHER" id="PTHR33175">
    <property type="entry name" value="DNA-BINDING PROTEIN HU"/>
    <property type="match status" value="1"/>
</dbReference>
<dbReference type="PANTHER" id="PTHR33175:SF2">
    <property type="entry name" value="INTEGRATION HOST FACTOR SUBUNIT ALPHA"/>
    <property type="match status" value="1"/>
</dbReference>
<dbReference type="Pfam" id="PF00216">
    <property type="entry name" value="Bac_DNA_binding"/>
    <property type="match status" value="1"/>
</dbReference>
<dbReference type="PRINTS" id="PR01727">
    <property type="entry name" value="DNABINDINGHU"/>
</dbReference>
<dbReference type="SMART" id="SM00411">
    <property type="entry name" value="BHL"/>
    <property type="match status" value="1"/>
</dbReference>
<dbReference type="SUPFAM" id="SSF47729">
    <property type="entry name" value="IHF-like DNA-binding proteins"/>
    <property type="match status" value="1"/>
</dbReference>
<dbReference type="PROSITE" id="PS00045">
    <property type="entry name" value="HISTONE_LIKE"/>
    <property type="match status" value="1"/>
</dbReference>
<sequence length="103" mass="11555">MNVTLTKAELADLLFERVGLNKREAKDMVEGFFEEIRTALERGDSVKLSGFGNFQLRDKPQRPGRNPKTGEEIPITARRVVTFHASQKLKAAVEQLSDASKQP</sequence>
<protein>
    <recommendedName>
        <fullName evidence="1">Integration host factor subunit alpha</fullName>
        <shortName evidence="1">IHF-alpha</shortName>
    </recommendedName>
</protein>
<feature type="chain" id="PRO_1000080022" description="Integration host factor subunit alpha">
    <location>
        <begin position="1"/>
        <end position="103"/>
    </location>
</feature>
<feature type="region of interest" description="Disordered" evidence="2">
    <location>
        <begin position="51"/>
        <end position="73"/>
    </location>
</feature>
<keyword id="KW-0233">DNA recombination</keyword>
<keyword id="KW-0238">DNA-binding</keyword>
<keyword id="KW-1185">Reference proteome</keyword>
<keyword id="KW-0804">Transcription</keyword>
<keyword id="KW-0805">Transcription regulation</keyword>
<keyword id="KW-0810">Translation regulation</keyword>
<evidence type="ECO:0000255" key="1">
    <source>
        <dbReference type="HAMAP-Rule" id="MF_00380"/>
    </source>
</evidence>
<evidence type="ECO:0000256" key="2">
    <source>
        <dbReference type="SAM" id="MobiDB-lite"/>
    </source>
</evidence>
<proteinExistence type="inferred from homology"/>
<name>IHFA_AZOSB</name>
<gene>
    <name evidence="1" type="primary">ihfA</name>
    <name evidence="1" type="synonym">himA</name>
    <name type="ordered locus">azo1085</name>
</gene>
<organism>
    <name type="scientific">Azoarcus sp. (strain BH72)</name>
    <dbReference type="NCBI Taxonomy" id="418699"/>
    <lineage>
        <taxon>Bacteria</taxon>
        <taxon>Pseudomonadati</taxon>
        <taxon>Pseudomonadota</taxon>
        <taxon>Betaproteobacteria</taxon>
        <taxon>Rhodocyclales</taxon>
        <taxon>Zoogloeaceae</taxon>
        <taxon>Azoarcus</taxon>
    </lineage>
</organism>
<accession>A1K4E7</accession>
<comment type="function">
    <text evidence="1">This protein is one of the two subunits of integration host factor, a specific DNA-binding protein that functions in genetic recombination as well as in transcriptional and translational control.</text>
</comment>
<comment type="subunit">
    <text evidence="1">Heterodimer of an alpha and a beta chain.</text>
</comment>
<comment type="similarity">
    <text evidence="1">Belongs to the bacterial histone-like protein family.</text>
</comment>
<reference key="1">
    <citation type="journal article" date="2006" name="Nat. Biotechnol.">
        <title>Complete genome of the mutualistic, N2-fixing grass endophyte Azoarcus sp. strain BH72.</title>
        <authorList>
            <person name="Krause A."/>
            <person name="Ramakumar A."/>
            <person name="Bartels D."/>
            <person name="Battistoni F."/>
            <person name="Bekel T."/>
            <person name="Boch J."/>
            <person name="Boehm M."/>
            <person name="Friedrich F."/>
            <person name="Hurek T."/>
            <person name="Krause L."/>
            <person name="Linke B."/>
            <person name="McHardy A.C."/>
            <person name="Sarkar A."/>
            <person name="Schneiker S."/>
            <person name="Syed A.A."/>
            <person name="Thauer R."/>
            <person name="Vorhoelter F.-J."/>
            <person name="Weidner S."/>
            <person name="Puehler A."/>
            <person name="Reinhold-Hurek B."/>
            <person name="Kaiser O."/>
            <person name="Goesmann A."/>
        </authorList>
    </citation>
    <scope>NUCLEOTIDE SEQUENCE [LARGE SCALE GENOMIC DNA]</scope>
    <source>
        <strain>BH72</strain>
    </source>
</reference>